<feature type="signal peptide" evidence="1">
    <location>
        <begin position="1"/>
        <end position="31"/>
    </location>
</feature>
<feature type="chain" id="PRO_0000448325" description="Ulvan Lyase-PL25">
    <location>
        <begin position="32"/>
        <end position="489"/>
    </location>
</feature>
<feature type="active site" description="Proton donor" evidence="5">
    <location>
        <position position="123"/>
    </location>
</feature>
<feature type="active site" description="Proton acceptor" evidence="5">
    <location>
        <position position="188"/>
    </location>
</feature>
<feature type="binding site" evidence="2">
    <location>
        <position position="60"/>
    </location>
    <ligand>
        <name>substrate</name>
    </ligand>
</feature>
<feature type="binding site" evidence="2">
    <location>
        <position position="122"/>
    </location>
    <ligand>
        <name>substrate</name>
    </ligand>
</feature>
<feature type="binding site" evidence="2">
    <location>
        <position position="125"/>
    </location>
    <ligand>
        <name>substrate</name>
    </ligand>
</feature>
<feature type="binding site" evidence="2">
    <location>
        <position position="143"/>
    </location>
    <ligand>
        <name>substrate</name>
    </ligand>
</feature>
<feature type="binding site" evidence="2">
    <location>
        <position position="204"/>
    </location>
    <ligand>
        <name>substrate</name>
    </ligand>
</feature>
<feature type="binding site" evidence="2">
    <location>
        <position position="208"/>
    </location>
    <ligand>
        <name>substrate</name>
    </ligand>
</feature>
<feature type="binding site" evidence="2">
    <location>
        <position position="208"/>
    </location>
    <ligand>
        <name>Zn(2+)</name>
        <dbReference type="ChEBI" id="CHEBI:29105"/>
        <note>structural</note>
    </ligand>
</feature>
<feature type="binding site" evidence="2">
    <location>
        <position position="246"/>
    </location>
    <ligand>
        <name>substrate</name>
    </ligand>
</feature>
<feature type="binding site" evidence="2">
    <location>
        <position position="264"/>
    </location>
    <ligand>
        <name>Zn(2+)</name>
        <dbReference type="ChEBI" id="CHEBI:29105"/>
        <note>structural</note>
    </ligand>
</feature>
<feature type="binding site" evidence="2">
    <location>
        <position position="266"/>
    </location>
    <ligand>
        <name>Zn(2+)</name>
        <dbReference type="ChEBI" id="CHEBI:29105"/>
        <note>structural</note>
    </ligand>
</feature>
<feature type="binding site" evidence="2">
    <location>
        <position position="278"/>
    </location>
    <ligand>
        <name>substrate</name>
    </ligand>
</feature>
<feature type="binding site" evidence="2">
    <location>
        <position position="278"/>
    </location>
    <ligand>
        <name>Zn(2+)</name>
        <dbReference type="ChEBI" id="CHEBI:29105"/>
        <note>structural</note>
    </ligand>
</feature>
<feature type="site" description="Neutralizes the sugar carboxylate group at subsite +1" evidence="5">
    <location>
        <position position="204"/>
    </location>
</feature>
<feature type="lipid moiety-binding region" description="N-palmitoyl cysteine" evidence="1">
    <location>
        <position position="32"/>
    </location>
</feature>
<feature type="lipid moiety-binding region" description="S-diacylglycerol cysteine" evidence="1">
    <location>
        <position position="32"/>
    </location>
</feature>
<feature type="mutagenesis site" description="Loss of catalytic activity." evidence="2">
    <original>H</original>
    <variation>N</variation>
    <location>
        <position position="123"/>
    </location>
</feature>
<feature type="mutagenesis site" description="Loss of catalytic activity." evidence="2">
    <original>Y</original>
    <variation>F</variation>
    <location>
        <position position="188"/>
    </location>
</feature>
<feature type="mutagenesis site" description="Loss of catalytic activity." evidence="2">
    <original>R</original>
    <variation>N</variation>
    <location>
        <position position="204"/>
    </location>
</feature>
<feature type="mutagenesis site" description="Loss of catalytic activity." evidence="2">
    <original>H</original>
    <variation>N</variation>
    <location>
        <position position="264"/>
    </location>
</feature>
<feature type="strand" evidence="7">
    <location>
        <begin position="49"/>
        <end position="51"/>
    </location>
</feature>
<feature type="strand" evidence="7">
    <location>
        <begin position="53"/>
        <end position="57"/>
    </location>
</feature>
<feature type="strand" evidence="7">
    <location>
        <begin position="64"/>
        <end position="67"/>
    </location>
</feature>
<feature type="strand" evidence="7">
    <location>
        <begin position="69"/>
        <end position="73"/>
    </location>
</feature>
<feature type="strand" evidence="7">
    <location>
        <begin position="76"/>
        <end position="82"/>
    </location>
</feature>
<feature type="helix" evidence="7">
    <location>
        <begin position="84"/>
        <end position="86"/>
    </location>
</feature>
<feature type="strand" evidence="7">
    <location>
        <begin position="88"/>
        <end position="94"/>
    </location>
</feature>
<feature type="turn" evidence="7">
    <location>
        <begin position="95"/>
        <end position="98"/>
    </location>
</feature>
<feature type="strand" evidence="7">
    <location>
        <begin position="99"/>
        <end position="105"/>
    </location>
</feature>
<feature type="helix" evidence="7">
    <location>
        <begin position="110"/>
        <end position="113"/>
    </location>
</feature>
<feature type="strand" evidence="7">
    <location>
        <begin position="115"/>
        <end position="119"/>
    </location>
</feature>
<feature type="strand" evidence="7">
    <location>
        <begin position="127"/>
        <end position="130"/>
    </location>
</feature>
<feature type="strand" evidence="7">
    <location>
        <begin position="136"/>
        <end position="140"/>
    </location>
</feature>
<feature type="helix" evidence="7">
    <location>
        <begin position="147"/>
        <end position="149"/>
    </location>
</feature>
<feature type="strand" evidence="7">
    <location>
        <begin position="163"/>
        <end position="169"/>
    </location>
</feature>
<feature type="strand" evidence="7">
    <location>
        <begin position="176"/>
        <end position="178"/>
    </location>
</feature>
<feature type="strand" evidence="7">
    <location>
        <begin position="187"/>
        <end position="193"/>
    </location>
</feature>
<feature type="strand" evidence="7">
    <location>
        <begin position="199"/>
        <end position="210"/>
    </location>
</feature>
<feature type="strand" evidence="7">
    <location>
        <begin position="212"/>
        <end position="219"/>
    </location>
</feature>
<feature type="strand" evidence="7">
    <location>
        <begin position="228"/>
        <end position="231"/>
    </location>
</feature>
<feature type="strand" evidence="7">
    <location>
        <begin position="237"/>
        <end position="251"/>
    </location>
</feature>
<feature type="strand" evidence="7">
    <location>
        <begin position="256"/>
        <end position="267"/>
    </location>
</feature>
<feature type="helix" evidence="7">
    <location>
        <begin position="273"/>
        <end position="275"/>
    </location>
</feature>
<feature type="strand" evidence="7">
    <location>
        <begin position="282"/>
        <end position="291"/>
    </location>
</feature>
<feature type="turn" evidence="7">
    <location>
        <begin position="292"/>
        <end position="294"/>
    </location>
</feature>
<feature type="strand" evidence="7">
    <location>
        <begin position="307"/>
        <end position="309"/>
    </location>
</feature>
<feature type="helix" evidence="7">
    <location>
        <begin position="311"/>
        <end position="317"/>
    </location>
</feature>
<feature type="strand" evidence="7">
    <location>
        <begin position="319"/>
        <end position="321"/>
    </location>
</feature>
<feature type="strand" evidence="7">
    <location>
        <begin position="327"/>
        <end position="335"/>
    </location>
</feature>
<feature type="strand" evidence="7">
    <location>
        <begin position="341"/>
        <end position="348"/>
    </location>
</feature>
<feature type="strand" evidence="7">
    <location>
        <begin position="360"/>
        <end position="366"/>
    </location>
</feature>
<feature type="strand" evidence="7">
    <location>
        <begin position="368"/>
        <end position="378"/>
    </location>
</feature>
<feature type="strand" evidence="7">
    <location>
        <begin position="386"/>
        <end position="393"/>
    </location>
</feature>
<feature type="strand" evidence="7">
    <location>
        <begin position="397"/>
        <end position="405"/>
    </location>
</feature>
<feature type="strand" evidence="7">
    <location>
        <begin position="408"/>
        <end position="418"/>
    </location>
</feature>
<feature type="strand" evidence="7">
    <location>
        <begin position="424"/>
        <end position="432"/>
    </location>
</feature>
<feature type="strand" evidence="7">
    <location>
        <begin position="436"/>
        <end position="439"/>
    </location>
</feature>
<feature type="strand" evidence="7">
    <location>
        <begin position="452"/>
        <end position="468"/>
    </location>
</feature>
<feature type="strand" evidence="7">
    <location>
        <begin position="470"/>
        <end position="473"/>
    </location>
</feature>
<feature type="helix" evidence="7">
    <location>
        <begin position="478"/>
        <end position="484"/>
    </location>
</feature>
<organism>
    <name type="scientific">Pseudoalteromonas sp. (strain PLSV)</name>
    <dbReference type="NCBI Taxonomy" id="1547444"/>
    <lineage>
        <taxon>Bacteria</taxon>
        <taxon>Pseudomonadati</taxon>
        <taxon>Pseudomonadota</taxon>
        <taxon>Gammaproteobacteria</taxon>
        <taxon>Alteromonadales</taxon>
        <taxon>Pseudoalteromonadaceae</taxon>
        <taxon>Pseudoalteromonas</taxon>
    </lineage>
</organism>
<name>UL25_PSEXP</name>
<evidence type="ECO:0000255" key="1">
    <source>
        <dbReference type="PROSITE-ProRule" id="PRU00303"/>
    </source>
</evidence>
<evidence type="ECO:0000269" key="2">
    <source>
    </source>
</evidence>
<evidence type="ECO:0000303" key="3">
    <source>
    </source>
</evidence>
<evidence type="ECO:0000305" key="4"/>
<evidence type="ECO:0000305" key="5">
    <source>
    </source>
</evidence>
<evidence type="ECO:0000312" key="6">
    <source>
        <dbReference type="PDB" id="5UAM"/>
    </source>
</evidence>
<evidence type="ECO:0007829" key="7">
    <source>
        <dbReference type="PDB" id="5UAM"/>
    </source>
</evidence>
<protein>
    <recommendedName>
        <fullName evidence="3">Ulvan Lyase-PL25</fullName>
        <ecNumber evidence="2">4.2.2.-</ecNumber>
    </recommendedName>
</protein>
<reference key="1">
    <citation type="journal article" date="2014" name="Genome Announc.">
        <title>Draft genome sequence of Pseudoalteromonas sp. strain PLSV, an ulvan-degrading bacterium.</title>
        <authorList>
            <person name="Kopel M."/>
            <person name="Helbert W."/>
            <person name="Henrissat B."/>
            <person name="Doniger T."/>
            <person name="Banin E."/>
        </authorList>
    </citation>
    <scope>NUCLEOTIDE SEQUENCE [LARGE SCALE GENOMIC DNA]</scope>
    <source>
        <strain>PLSV</strain>
    </source>
</reference>
<reference evidence="6" key="2">
    <citation type="journal article" date="2017" name="ACS Chem. Biol.">
        <title>New ulvan-degrading polysaccharide lyase family: Structure and catalytic mechanism suggests convergent evolution of active site architecture.</title>
        <authorList>
            <person name="Ulaganathan T."/>
            <person name="Boniecki M.T."/>
            <person name="Foran E."/>
            <person name="Buravenkov V."/>
            <person name="Mizrachi N."/>
            <person name="Banin E."/>
            <person name="Helbert W."/>
            <person name="Cygler M."/>
        </authorList>
    </citation>
    <scope>X-RAY CRYSTALLOGRAPHY (1.45 ANGSTROMS) OF WILD-TYPE AND MUTANT HIS-123</scope>
    <scope>FUNCTION</scope>
    <scope>CATALYTIC ACTIVITY</scope>
    <scope>MUTAGENESIS OF HIS-123; TYR-188; ARG-204 AND HIS-264</scope>
</reference>
<sequence length="489" mass="54275">MNLNKTLRKNSPSGYKALLTFSIICGLMATGCAHQESLPNSTANSVDRQVGYFADNGVGNPLAIVQHPAGIHKNGITYVSYQGPKEDPYIASYNHQTGQWQGPFRAGISELGRRDGGKKFDNHGKPTMLIDDEGYIHIFYGGHGGQASNGKNPLGNTHHGANKHAVSKRPYDISQWEDLNNITPFGTYNQAIKMDNGDIYLFFRHGAHRSDWVYQKSVDNGRTFASPVSFLKHKRRTDIDAVDSWYAWAGKGQGDNIIVSYDYHVCWDGGAGVNGRGHTTERHDVYFMSFNTKTGEWSNVEGEKLVLPVTREVADEKTMAMRTGELWTFNGSTHLDAQGQPHIAINAGIDKGAKTGGPKQTRHVRWNGNEWVGGDKVIPQYERVSRGDFMVTDPENIRYLTTYNQDNDAVLSWWQSHDGGEHFVEDKTVLRKDNASFAISAFIKDAIPDAQMLVAEKVSDEGIKMYLVGEEGAVTRSLVDLKTAMPTSK</sequence>
<comment type="function">
    <text evidence="2">Ulvan lyase involved in ulvan degradation. Ulvan is the main polysaccharide component of the Ulvales (green seaweed) cell wall. It is composed of disaccharide building blocks comprising 3-sulfated rhamnose (Rha3S) linked to D-glucuronic acid (GlcA), L-iduronic acid (IduA), or D-xylose (Xyl). Ulvan lyase catalyzes the endolytic cleavage of the glycosidic bond between Rha3S and the uronic acids GlcA or IduA, producing oligosaccharides that have unsaturated 4-deoxy-L-threo-hex-4-enopyranosiduronic acid (deltaUA) at the non-reducing end. This results eventually in the degradation of the ulvan polysaccharide into deltaUA-Rha3S disaccharides and deltaUA-Rha3S-Xyl-Rha3S tetrasaccharides.</text>
</comment>
<comment type="subcellular location">
    <subcellularLocation>
        <location evidence="1">Cell membrane</location>
        <topology evidence="1">Lipid-anchor</topology>
    </subcellularLocation>
</comment>
<comment type="similarity">
    <text evidence="4">Belongs to the polysaccharide lyase 25 family.</text>
</comment>
<accession>A0A1W2VMZ5</accession>
<accession>A0A1W2VMZ6</accession>
<proteinExistence type="evidence at protein level"/>
<dbReference type="EC" id="4.2.2.-" evidence="2"/>
<dbReference type="PDB" id="5UAM">
    <property type="method" value="X-ray"/>
    <property type="resolution" value="1.45 A"/>
    <property type="chains" value="A/B=34-489"/>
</dbReference>
<dbReference type="PDB" id="5UAS">
    <property type="method" value="X-ray"/>
    <property type="resolution" value="1.60 A"/>
    <property type="chains" value="A/B=34-489"/>
</dbReference>
<dbReference type="PDBsum" id="5UAM"/>
<dbReference type="PDBsum" id="5UAS"/>
<dbReference type="SMR" id="A0A1W2VMZ5"/>
<dbReference type="GO" id="GO:0005886">
    <property type="term" value="C:plasma membrane"/>
    <property type="evidence" value="ECO:0007669"/>
    <property type="project" value="UniProtKB-SubCell"/>
</dbReference>
<dbReference type="GO" id="GO:0016829">
    <property type="term" value="F:lyase activity"/>
    <property type="evidence" value="ECO:0007669"/>
    <property type="project" value="UniProtKB-KW"/>
</dbReference>
<dbReference type="GO" id="GO:0046872">
    <property type="term" value="F:metal ion binding"/>
    <property type="evidence" value="ECO:0007669"/>
    <property type="project" value="UniProtKB-KW"/>
</dbReference>
<dbReference type="InterPro" id="IPR036278">
    <property type="entry name" value="Sialidase_sf"/>
</dbReference>
<dbReference type="Pfam" id="PF15892">
    <property type="entry name" value="BNR_4"/>
    <property type="match status" value="1"/>
</dbReference>
<dbReference type="SUPFAM" id="SSF50939">
    <property type="entry name" value="Sialidases"/>
    <property type="match status" value="1"/>
</dbReference>
<dbReference type="PROSITE" id="PS51257">
    <property type="entry name" value="PROKAR_LIPOPROTEIN"/>
    <property type="match status" value="1"/>
</dbReference>
<gene>
    <name type="ORF">PLSV_3936</name>
</gene>
<keyword id="KW-0002">3D-structure</keyword>
<keyword id="KW-1003">Cell membrane</keyword>
<keyword id="KW-0449">Lipoprotein</keyword>
<keyword id="KW-0456">Lyase</keyword>
<keyword id="KW-0472">Membrane</keyword>
<keyword id="KW-0479">Metal-binding</keyword>
<keyword id="KW-0564">Palmitate</keyword>
<keyword id="KW-0732">Signal</keyword>
<keyword id="KW-0862">Zinc</keyword>